<feature type="chain" id="PRO_0000447587" description="HTH-type transcriptional regulator AqdR">
    <location>
        <begin position="1"/>
        <end position="207"/>
    </location>
</feature>
<feature type="domain" description="HTH tetR-type" evidence="1">
    <location>
        <begin position="16"/>
        <end position="76"/>
    </location>
</feature>
<feature type="DNA-binding region" description="H-T-H motif" evidence="1">
    <location>
        <begin position="39"/>
        <end position="58"/>
    </location>
</feature>
<proteinExistence type="evidence at transcript level"/>
<gene>
    <name evidence="3" type="primary">aqdR</name>
    <name evidence="6" type="ORF">XU06_29725</name>
</gene>
<accession>A0A0E4AFE3</accession>
<sequence>MTDPEHSGQRAQVRGARFRERVLDATIACITEAGVDNVGFADVARKAGVNGVSLYRRWKTVPRLLIDALLTRTQAEVPIPDTGSVHRDLEIFATELTKFAQTPIGTALIRFTVVSADSPEVDVSRREFWMQRLTAAEEIIERGKNRGEVDSSTDSRLVVLTLGGLVHIYVTHLGTDIPTSLPHQAVSLILSGVTSGVTQARTNAQMG</sequence>
<name>AQDR_RHOER</name>
<dbReference type="EMBL" id="CP011296">
    <property type="protein sequence ID" value="AKE01139.1"/>
    <property type="molecule type" value="Genomic_DNA"/>
</dbReference>
<dbReference type="RefSeq" id="WP_046380182.1">
    <property type="nucleotide sequence ID" value="NZ_CP011296.1"/>
</dbReference>
<dbReference type="SMR" id="A0A0E4AFE3"/>
<dbReference type="KEGG" id="reb:XU06_29725"/>
<dbReference type="PATRIC" id="fig|1833.80.peg.6122"/>
<dbReference type="GO" id="GO:0003700">
    <property type="term" value="F:DNA-binding transcription factor activity"/>
    <property type="evidence" value="ECO:0007669"/>
    <property type="project" value="TreeGrafter"/>
</dbReference>
<dbReference type="GO" id="GO:0000976">
    <property type="term" value="F:transcription cis-regulatory region binding"/>
    <property type="evidence" value="ECO:0007669"/>
    <property type="project" value="TreeGrafter"/>
</dbReference>
<dbReference type="Gene3D" id="1.10.10.60">
    <property type="entry name" value="Homeodomain-like"/>
    <property type="match status" value="1"/>
</dbReference>
<dbReference type="Gene3D" id="1.10.357.10">
    <property type="entry name" value="Tetracycline Repressor, domain 2"/>
    <property type="match status" value="1"/>
</dbReference>
<dbReference type="InterPro" id="IPR009057">
    <property type="entry name" value="Homeodomain-like_sf"/>
</dbReference>
<dbReference type="InterPro" id="IPR050109">
    <property type="entry name" value="HTH-type_TetR-like_transc_reg"/>
</dbReference>
<dbReference type="InterPro" id="IPR001647">
    <property type="entry name" value="HTH_TetR"/>
</dbReference>
<dbReference type="InterPro" id="IPR036271">
    <property type="entry name" value="Tet_transcr_reg_TetR-rel_C_sf"/>
</dbReference>
<dbReference type="InterPro" id="IPR011075">
    <property type="entry name" value="TetR_C"/>
</dbReference>
<dbReference type="PANTHER" id="PTHR30055">
    <property type="entry name" value="HTH-TYPE TRANSCRIPTIONAL REGULATOR RUTR"/>
    <property type="match status" value="1"/>
</dbReference>
<dbReference type="PANTHER" id="PTHR30055:SF148">
    <property type="entry name" value="TETR-FAMILY TRANSCRIPTIONAL REGULATOR"/>
    <property type="match status" value="1"/>
</dbReference>
<dbReference type="Pfam" id="PF16859">
    <property type="entry name" value="TetR_C_11"/>
    <property type="match status" value="1"/>
</dbReference>
<dbReference type="Pfam" id="PF00440">
    <property type="entry name" value="TetR_N"/>
    <property type="match status" value="1"/>
</dbReference>
<dbReference type="SUPFAM" id="SSF46689">
    <property type="entry name" value="Homeodomain-like"/>
    <property type="match status" value="1"/>
</dbReference>
<dbReference type="SUPFAM" id="SSF48498">
    <property type="entry name" value="Tetracyclin repressor-like, C-terminal domain"/>
    <property type="match status" value="1"/>
</dbReference>
<dbReference type="PROSITE" id="PS50977">
    <property type="entry name" value="HTH_TETR_2"/>
    <property type="match status" value="1"/>
</dbReference>
<evidence type="ECO:0000255" key="1">
    <source>
        <dbReference type="PROSITE-ProRule" id="PRU00335"/>
    </source>
</evidence>
<evidence type="ECO:0000269" key="2">
    <source>
    </source>
</evidence>
<evidence type="ECO:0000303" key="3">
    <source>
    </source>
</evidence>
<evidence type="ECO:0000305" key="4"/>
<evidence type="ECO:0000305" key="5">
    <source>
    </source>
</evidence>
<evidence type="ECO:0000312" key="6">
    <source>
        <dbReference type="EMBL" id="AKE01139.1"/>
    </source>
</evidence>
<keyword id="KW-0238">DNA-binding</keyword>
<keyword id="KW-0614">Plasmid</keyword>
<keyword id="KW-0804">Transcription</keyword>
<keyword id="KW-0805">Transcription regulation</keyword>
<geneLocation type="plasmid">
    <name>pRLCBG43</name>
</geneLocation>
<protein>
    <recommendedName>
        <fullName evidence="4">HTH-type transcriptional regulator AqdR</fullName>
    </recommendedName>
</protein>
<organism>
    <name type="scientific">Rhodococcus erythropolis</name>
    <name type="common">Arthrobacter picolinophilus</name>
    <dbReference type="NCBI Taxonomy" id="1833"/>
    <lineage>
        <taxon>Bacteria</taxon>
        <taxon>Bacillati</taxon>
        <taxon>Actinomycetota</taxon>
        <taxon>Actinomycetes</taxon>
        <taxon>Mycobacteriales</taxon>
        <taxon>Nocardiaceae</taxon>
        <taxon>Rhodococcus</taxon>
        <taxon>Rhodococcus erythropolis group</taxon>
    </lineage>
</organism>
<comment type="function">
    <text evidence="5">May regulate the expression of genes involved in the degradation of the Pseudomonas aeruginosa quorum sensing signal molecules HHQ (2-heptyl-4-quinolone) and PQS (2-heptyl-3-hydroxy-4-quinolone).</text>
</comment>
<comment type="induction">
    <text evidence="2">Up-regulated by PQS.</text>
</comment>
<reference key="1">
    <citation type="journal article" date="2015" name="J. Biotechnol.">
        <title>Complete genome sequence of Rhodococcus erythropolis BG43 (DSM 46869), a degrader of Pseudomonas aeruginosa quorum sensing signal molecules.</title>
        <authorList>
            <person name="Rueckert C."/>
            <person name="Birmes F.S."/>
            <person name="Mueller C."/>
            <person name="Niewerth H."/>
            <person name="Winkler A."/>
            <person name="Fetzner S."/>
            <person name="Kalinowski J."/>
        </authorList>
    </citation>
    <scope>NUCLEOTIDE SEQUENCE [LARGE SCALE GENOMIC DNA]</scope>
    <source>
        <strain>DSM 46869 / BG43</strain>
    </source>
</reference>
<reference key="2">
    <citation type="journal article" date="2015" name="Appl. Environ. Microbiol.">
        <title>Rhodococcus erythropolis BG43 genes mediating Pseudomonas aeruginosa quinolone signal degradation and virulence factor attenuation.</title>
        <authorList>
            <person name="Mueller C."/>
            <person name="Birmes F.S."/>
            <person name="Rueckert C."/>
            <person name="Kalinowski J."/>
            <person name="Fetzner S."/>
        </authorList>
    </citation>
    <scope>FUNCTION</scope>
    <scope>INDUCTION</scope>
    <source>
        <strain>DSM 46869 / BG43</strain>
    </source>
</reference>